<name>FBPC_YERPN</name>
<accession>Q1CJS9</accession>
<accession>C4GS41</accession>
<protein>
    <recommendedName>
        <fullName evidence="1">Fe(3+) ions import ATP-binding protein FbpC</fullName>
        <ecNumber evidence="1">7.2.2.7</ecNumber>
    </recommendedName>
</protein>
<comment type="function">
    <text evidence="1">Part of the ABC transporter complex FbpABC involved in Fe(3+) ions import. Responsible for energy coupling to the transport system.</text>
</comment>
<comment type="catalytic activity">
    <reaction evidence="1">
        <text>Fe(3+)(out) + ATP + H2O = Fe(3+)(in) + ADP + phosphate + H(+)</text>
        <dbReference type="Rhea" id="RHEA:12332"/>
        <dbReference type="ChEBI" id="CHEBI:15377"/>
        <dbReference type="ChEBI" id="CHEBI:15378"/>
        <dbReference type="ChEBI" id="CHEBI:29034"/>
        <dbReference type="ChEBI" id="CHEBI:30616"/>
        <dbReference type="ChEBI" id="CHEBI:43474"/>
        <dbReference type="ChEBI" id="CHEBI:456216"/>
        <dbReference type="EC" id="7.2.2.7"/>
    </reaction>
</comment>
<comment type="subunit">
    <text evidence="1">The complex is composed of two ATP-binding proteins (FbpC), two transmembrane proteins (FbpB) and a solute-binding protein (FbpA).</text>
</comment>
<comment type="subcellular location">
    <subcellularLocation>
        <location evidence="1">Cell inner membrane</location>
        <topology evidence="1">Peripheral membrane protein</topology>
    </subcellularLocation>
</comment>
<comment type="similarity">
    <text evidence="1">Belongs to the ABC transporter superfamily. Fe(3+) ion importer (TC 3.A.1.10) family.</text>
</comment>
<reference key="1">
    <citation type="journal article" date="2006" name="J. Bacteriol.">
        <title>Complete genome sequence of Yersinia pestis strains Antiqua and Nepal516: evidence of gene reduction in an emerging pathogen.</title>
        <authorList>
            <person name="Chain P.S.G."/>
            <person name="Hu P."/>
            <person name="Malfatti S.A."/>
            <person name="Radnedge L."/>
            <person name="Larimer F."/>
            <person name="Vergez L.M."/>
            <person name="Worsham P."/>
            <person name="Chu M.C."/>
            <person name="Andersen G.L."/>
        </authorList>
    </citation>
    <scope>NUCLEOTIDE SEQUENCE [LARGE SCALE GENOMIC DNA]</scope>
    <source>
        <strain>Nepal516</strain>
    </source>
</reference>
<reference key="2">
    <citation type="submission" date="2009-04" db="EMBL/GenBank/DDBJ databases">
        <title>Yersinia pestis Nepal516A whole genome shotgun sequencing project.</title>
        <authorList>
            <person name="Plunkett G. III"/>
            <person name="Anderson B.D."/>
            <person name="Baumler D.J."/>
            <person name="Burland V."/>
            <person name="Cabot E.L."/>
            <person name="Glasner J.D."/>
            <person name="Mau B."/>
            <person name="Neeno-Eckwall E."/>
            <person name="Perna N.T."/>
            <person name="Munk A.C."/>
            <person name="Tapia R."/>
            <person name="Green L.D."/>
            <person name="Rogers Y.C."/>
            <person name="Detter J.C."/>
            <person name="Bruce D.C."/>
            <person name="Brettin T.S."/>
        </authorList>
    </citation>
    <scope>NUCLEOTIDE SEQUENCE [LARGE SCALE GENOMIC DNA]</scope>
    <source>
        <strain>Nepal516</strain>
    </source>
</reference>
<evidence type="ECO:0000255" key="1">
    <source>
        <dbReference type="HAMAP-Rule" id="MF_01706"/>
    </source>
</evidence>
<keyword id="KW-0067">ATP-binding</keyword>
<keyword id="KW-0997">Cell inner membrane</keyword>
<keyword id="KW-1003">Cell membrane</keyword>
<keyword id="KW-0406">Ion transport</keyword>
<keyword id="KW-0408">Iron</keyword>
<keyword id="KW-0410">Iron transport</keyword>
<keyword id="KW-0472">Membrane</keyword>
<keyword id="KW-0547">Nucleotide-binding</keyword>
<keyword id="KW-1278">Translocase</keyword>
<keyword id="KW-0813">Transport</keyword>
<feature type="chain" id="PRO_0000272049" description="Fe(3+) ions import ATP-binding protein FbpC">
    <location>
        <begin position="1"/>
        <end position="349"/>
    </location>
</feature>
<feature type="domain" description="ABC transporter" evidence="1">
    <location>
        <begin position="4"/>
        <end position="236"/>
    </location>
</feature>
<feature type="binding site" evidence="1">
    <location>
        <begin position="36"/>
        <end position="43"/>
    </location>
    <ligand>
        <name>ATP</name>
        <dbReference type="ChEBI" id="CHEBI:30616"/>
    </ligand>
</feature>
<proteinExistence type="inferred from homology"/>
<sequence length="349" mass="37756">MSTLELHHIGKSYQSVMVLDRIDLHVPPGSRTAIVGPSGSGKTTLLRIIAGFETPDAGKVILQGKAMFDGTTYVPAHKRGIGFVPQDGALFPHFTVAGNIGYGLKGSQRDKERRINELMDMVALDRRLSALWPHEISGGQQQRVALARALAQRPVLMLLDEPFSALDTALRASTRKAVAELLSEANIASILVTHDQTEALSFADQVAVMRAGKLAHVGPPQELYLRPVDEPTATFLGETLMLTAQLGTGLAHCALGQVKVDNPHRRGEARIMLRPEQITLTPLRPEQYNAASCLAKVIAIDFAGFISTLTLQIISSGETIEIKTISREDLHVGLTVGLDIMGQAHIFAE</sequence>
<dbReference type="EC" id="7.2.2.7" evidence="1"/>
<dbReference type="EMBL" id="CP000305">
    <property type="protein sequence ID" value="ABG17751.1"/>
    <property type="molecule type" value="Genomic_DNA"/>
</dbReference>
<dbReference type="EMBL" id="ACNQ01000009">
    <property type="protein sequence ID" value="EEO76851.1"/>
    <property type="molecule type" value="Genomic_DNA"/>
</dbReference>
<dbReference type="RefSeq" id="WP_002211598.1">
    <property type="nucleotide sequence ID" value="NZ_ACNQ01000009.1"/>
</dbReference>
<dbReference type="SMR" id="Q1CJS9"/>
<dbReference type="KEGG" id="ypn:YPN_1421"/>
<dbReference type="HOGENOM" id="CLU_000604_1_1_6"/>
<dbReference type="Proteomes" id="UP000008936">
    <property type="component" value="Chromosome"/>
</dbReference>
<dbReference type="GO" id="GO:0005886">
    <property type="term" value="C:plasma membrane"/>
    <property type="evidence" value="ECO:0007669"/>
    <property type="project" value="UniProtKB-SubCell"/>
</dbReference>
<dbReference type="GO" id="GO:0015408">
    <property type="term" value="F:ABC-type ferric iron transporter activity"/>
    <property type="evidence" value="ECO:0007669"/>
    <property type="project" value="UniProtKB-EC"/>
</dbReference>
<dbReference type="GO" id="GO:0005524">
    <property type="term" value="F:ATP binding"/>
    <property type="evidence" value="ECO:0007669"/>
    <property type="project" value="UniProtKB-KW"/>
</dbReference>
<dbReference type="GO" id="GO:0016887">
    <property type="term" value="F:ATP hydrolysis activity"/>
    <property type="evidence" value="ECO:0007669"/>
    <property type="project" value="InterPro"/>
</dbReference>
<dbReference type="CDD" id="cd03259">
    <property type="entry name" value="ABC_Carb_Solutes_like"/>
    <property type="match status" value="1"/>
</dbReference>
<dbReference type="FunFam" id="3.40.50.300:FF:000425">
    <property type="entry name" value="Probable ABC transporter, ATP-binding subunit"/>
    <property type="match status" value="1"/>
</dbReference>
<dbReference type="Gene3D" id="2.40.50.450">
    <property type="match status" value="1"/>
</dbReference>
<dbReference type="Gene3D" id="3.40.50.300">
    <property type="entry name" value="P-loop containing nucleotide triphosphate hydrolases"/>
    <property type="match status" value="1"/>
</dbReference>
<dbReference type="InterPro" id="IPR003593">
    <property type="entry name" value="AAA+_ATPase"/>
</dbReference>
<dbReference type="InterPro" id="IPR050093">
    <property type="entry name" value="ABC_SmlMolc_Importer"/>
</dbReference>
<dbReference type="InterPro" id="IPR003439">
    <property type="entry name" value="ABC_transporter-like_ATP-bd"/>
</dbReference>
<dbReference type="InterPro" id="IPR017871">
    <property type="entry name" value="ABC_transporter-like_CS"/>
</dbReference>
<dbReference type="InterPro" id="IPR015853">
    <property type="entry name" value="ABC_transpr_FbpC"/>
</dbReference>
<dbReference type="InterPro" id="IPR008995">
    <property type="entry name" value="Mo/tungstate-bd_C_term_dom"/>
</dbReference>
<dbReference type="InterPro" id="IPR027417">
    <property type="entry name" value="P-loop_NTPase"/>
</dbReference>
<dbReference type="PANTHER" id="PTHR42781">
    <property type="entry name" value="SPERMIDINE/PUTRESCINE IMPORT ATP-BINDING PROTEIN POTA"/>
    <property type="match status" value="1"/>
</dbReference>
<dbReference type="PANTHER" id="PTHR42781:SF4">
    <property type="entry name" value="SPERMIDINE_PUTRESCINE IMPORT ATP-BINDING PROTEIN POTA"/>
    <property type="match status" value="1"/>
</dbReference>
<dbReference type="Pfam" id="PF00005">
    <property type="entry name" value="ABC_tran"/>
    <property type="match status" value="1"/>
</dbReference>
<dbReference type="SMART" id="SM00382">
    <property type="entry name" value="AAA"/>
    <property type="match status" value="1"/>
</dbReference>
<dbReference type="SUPFAM" id="SSF50331">
    <property type="entry name" value="MOP-like"/>
    <property type="match status" value="1"/>
</dbReference>
<dbReference type="SUPFAM" id="SSF52540">
    <property type="entry name" value="P-loop containing nucleoside triphosphate hydrolases"/>
    <property type="match status" value="1"/>
</dbReference>
<dbReference type="PROSITE" id="PS00211">
    <property type="entry name" value="ABC_TRANSPORTER_1"/>
    <property type="match status" value="1"/>
</dbReference>
<dbReference type="PROSITE" id="PS50893">
    <property type="entry name" value="ABC_TRANSPORTER_2"/>
    <property type="match status" value="1"/>
</dbReference>
<dbReference type="PROSITE" id="PS51242">
    <property type="entry name" value="FBPC"/>
    <property type="match status" value="1"/>
</dbReference>
<organism>
    <name type="scientific">Yersinia pestis bv. Antiqua (strain Nepal516)</name>
    <dbReference type="NCBI Taxonomy" id="377628"/>
    <lineage>
        <taxon>Bacteria</taxon>
        <taxon>Pseudomonadati</taxon>
        <taxon>Pseudomonadota</taxon>
        <taxon>Gammaproteobacteria</taxon>
        <taxon>Enterobacterales</taxon>
        <taxon>Yersiniaceae</taxon>
        <taxon>Yersinia</taxon>
    </lineage>
</organism>
<gene>
    <name evidence="1" type="primary">fbpC</name>
    <name type="ordered locus">YPN_1421</name>
    <name type="ORF">YP516_1578</name>
</gene>